<reference key="1">
    <citation type="journal article" date="1997" name="Insect Biochem. Mol. Biol.">
        <title>Structure and spatial expression of the Manduca sexta MSCP14.6 cuticle gene.</title>
        <authorList>
            <person name="Rebers J.E."/>
            <person name="Niu J."/>
            <person name="Riddiford L.M."/>
        </authorList>
    </citation>
    <scope>NUCLEOTIDE SEQUENCE [GENOMIC DNA / MRNA]</scope>
    <source>
        <tissue>Epidermis</tissue>
    </source>
</reference>
<accession>Q94984</accession>
<feature type="signal peptide" evidence="1">
    <location>
        <begin position="1"/>
        <end position="16"/>
    </location>
</feature>
<feature type="chain" id="PRO_0000006408" description="Cuticle protein CP14.6">
    <location>
        <begin position="17"/>
        <end position="106"/>
    </location>
</feature>
<feature type="domain" description="Chitin-binding type R&amp;R" evidence="2">
    <location>
        <begin position="37"/>
        <end position="106"/>
    </location>
</feature>
<dbReference type="EMBL" id="U65902">
    <property type="protein sequence ID" value="AAC47496.1"/>
    <property type="molecule type" value="mRNA"/>
</dbReference>
<dbReference type="EMBL" id="U65901">
    <property type="protein sequence ID" value="AAC47495.1"/>
    <property type="molecule type" value="Genomic_DNA"/>
</dbReference>
<dbReference type="EnsemblMetazoa" id="XM_030175454.2">
    <property type="protein sequence ID" value="XP_030031314.1"/>
    <property type="gene ID" value="LOC115448139"/>
</dbReference>
<dbReference type="OrthoDB" id="7255276at2759"/>
<dbReference type="GO" id="GO:0062129">
    <property type="term" value="C:chitin-based extracellular matrix"/>
    <property type="evidence" value="ECO:0007669"/>
    <property type="project" value="TreeGrafter"/>
</dbReference>
<dbReference type="GO" id="GO:0008010">
    <property type="term" value="F:structural constituent of chitin-based larval cuticle"/>
    <property type="evidence" value="ECO:0007669"/>
    <property type="project" value="TreeGrafter"/>
</dbReference>
<dbReference type="InterPro" id="IPR031311">
    <property type="entry name" value="CHIT_BIND_RR_consensus"/>
</dbReference>
<dbReference type="InterPro" id="IPR050468">
    <property type="entry name" value="Cuticle_Struct_Prot"/>
</dbReference>
<dbReference type="InterPro" id="IPR000618">
    <property type="entry name" value="Insect_cuticle"/>
</dbReference>
<dbReference type="PANTHER" id="PTHR10380:SF218">
    <property type="entry name" value="ADULT CUTICLE PROTEIN 65AA-RELATED"/>
    <property type="match status" value="1"/>
</dbReference>
<dbReference type="PANTHER" id="PTHR10380">
    <property type="entry name" value="CUTICLE PROTEIN"/>
    <property type="match status" value="1"/>
</dbReference>
<dbReference type="Pfam" id="PF00379">
    <property type="entry name" value="Chitin_bind_4"/>
    <property type="match status" value="1"/>
</dbReference>
<dbReference type="PRINTS" id="PR00947">
    <property type="entry name" value="CUTICLE"/>
</dbReference>
<dbReference type="PROSITE" id="PS00233">
    <property type="entry name" value="CHIT_BIND_RR_1"/>
    <property type="match status" value="1"/>
</dbReference>
<dbReference type="PROSITE" id="PS51155">
    <property type="entry name" value="CHIT_BIND_RR_2"/>
    <property type="match status" value="1"/>
</dbReference>
<protein>
    <recommendedName>
        <fullName>Cuticle protein CP14.6</fullName>
    </recommendedName>
    <alternativeName>
        <fullName>MSCP14.6</fullName>
    </alternativeName>
</protein>
<comment type="function">
    <text>Component of the cuticle of tobacco hornworm.</text>
</comment>
<comment type="developmental stage">
    <text>Expressed throughout the epidermis in larvae with the exception of the bristle cells. Only found in the flexible intersegmental cuticle during endocuticular deposition in the pharate pupae. Restricted to epidermal cells at the muscle attachment sites in the adult.</text>
</comment>
<gene>
    <name type="primary">CP14.6</name>
</gene>
<keyword id="KW-0193">Cuticle</keyword>
<keyword id="KW-0732">Signal</keyword>
<proteinExistence type="evidence at transcript level"/>
<organism>
    <name type="scientific">Manduca sexta</name>
    <name type="common">Tobacco hawkmoth</name>
    <name type="synonym">Tobacco hornworm</name>
    <dbReference type="NCBI Taxonomy" id="7130"/>
    <lineage>
        <taxon>Eukaryota</taxon>
        <taxon>Metazoa</taxon>
        <taxon>Ecdysozoa</taxon>
        <taxon>Arthropoda</taxon>
        <taxon>Hexapoda</taxon>
        <taxon>Insecta</taxon>
        <taxon>Pterygota</taxon>
        <taxon>Neoptera</taxon>
        <taxon>Endopterygota</taxon>
        <taxon>Lepidoptera</taxon>
        <taxon>Glossata</taxon>
        <taxon>Ditrysia</taxon>
        <taxon>Bombycoidea</taxon>
        <taxon>Sphingidae</taxon>
        <taxon>Sphinginae</taxon>
        <taxon>Sphingini</taxon>
        <taxon>Manduca</taxon>
    </lineage>
</organism>
<sequence length="106" mass="11014">MKSFFVVALLVAAAAAAPANPDADAVIVRYDADQGDPQHYSYSVETSNGIAFSEEGALKNVGSENEANSVRGSYAYVGPDGVTYSVVYIADENGFQPQGAHLPVAA</sequence>
<name>CU15_MANSE</name>
<evidence type="ECO:0000255" key="1"/>
<evidence type="ECO:0000255" key="2">
    <source>
        <dbReference type="PROSITE-ProRule" id="PRU00497"/>
    </source>
</evidence>